<organism>
    <name type="scientific">Mycobacterium sp. (strain MCS)</name>
    <dbReference type="NCBI Taxonomy" id="164756"/>
    <lineage>
        <taxon>Bacteria</taxon>
        <taxon>Bacillati</taxon>
        <taxon>Actinomycetota</taxon>
        <taxon>Actinomycetes</taxon>
        <taxon>Mycobacteriales</taxon>
        <taxon>Mycobacteriaceae</taxon>
        <taxon>Mycobacterium</taxon>
    </lineage>
</organism>
<gene>
    <name evidence="1" type="primary">nadD</name>
    <name type="ordered locus">Mmcs_3530</name>
</gene>
<protein>
    <recommendedName>
        <fullName evidence="1">Probable nicotinate-nucleotide adenylyltransferase</fullName>
        <ecNumber evidence="1">2.7.7.18</ecNumber>
    </recommendedName>
    <alternativeName>
        <fullName evidence="1">Deamido-NAD(+) diphosphorylase</fullName>
    </alternativeName>
    <alternativeName>
        <fullName evidence="1">Deamido-NAD(+) pyrophosphorylase</fullName>
    </alternativeName>
    <alternativeName>
        <fullName evidence="1">Nicotinate mononucleotide adenylyltransferase</fullName>
        <shortName evidence="1">NaMN adenylyltransferase</shortName>
    </alternativeName>
</protein>
<comment type="function">
    <text evidence="1">Catalyzes the reversible adenylation of nicotinate mononucleotide (NaMN) to nicotinic acid adenine dinucleotide (NaAD).</text>
</comment>
<comment type="catalytic activity">
    <reaction evidence="1">
        <text>nicotinate beta-D-ribonucleotide + ATP + H(+) = deamido-NAD(+) + diphosphate</text>
        <dbReference type="Rhea" id="RHEA:22860"/>
        <dbReference type="ChEBI" id="CHEBI:15378"/>
        <dbReference type="ChEBI" id="CHEBI:30616"/>
        <dbReference type="ChEBI" id="CHEBI:33019"/>
        <dbReference type="ChEBI" id="CHEBI:57502"/>
        <dbReference type="ChEBI" id="CHEBI:58437"/>
        <dbReference type="EC" id="2.7.7.18"/>
    </reaction>
</comment>
<comment type="pathway">
    <text evidence="1">Cofactor biosynthesis; NAD(+) biosynthesis; deamido-NAD(+) from nicotinate D-ribonucleotide: step 1/1.</text>
</comment>
<comment type="similarity">
    <text evidence="1">Belongs to the NadD family.</text>
</comment>
<comment type="sequence caution" evidence="2">
    <conflict type="erroneous initiation">
        <sequence resource="EMBL-CDS" id="ABG09637"/>
    </conflict>
</comment>
<keyword id="KW-0067">ATP-binding</keyword>
<keyword id="KW-0520">NAD</keyword>
<keyword id="KW-0547">Nucleotide-binding</keyword>
<keyword id="KW-0548">Nucleotidyltransferase</keyword>
<keyword id="KW-0662">Pyridine nucleotide biosynthesis</keyword>
<keyword id="KW-0808">Transferase</keyword>
<accession>Q1B647</accession>
<feature type="chain" id="PRO_0000336714" description="Probable nicotinate-nucleotide adenylyltransferase">
    <location>
        <begin position="1"/>
        <end position="204"/>
    </location>
</feature>
<sequence>MGGTFDPIHHGHLVAASEVADLFDLDEVVFVPTGQPWQKHDRRVTAPEDRYLMTVIATASNPRFSVSRVDIDRGGPTYTKDTLRDLHELNPDADLYFITGADALGSILSWQNWEEMFSIARFVGVSRPGYELDGKHISAALRELPADALSLVEVPALAISSSDCRKRAVEARPIWYLVPDGVVQYVTKRRLYLPEPTPELRTPE</sequence>
<dbReference type="EC" id="2.7.7.18" evidence="1"/>
<dbReference type="EMBL" id="CP000384">
    <property type="protein sequence ID" value="ABG09637.1"/>
    <property type="status" value="ALT_INIT"/>
    <property type="molecule type" value="Genomic_DNA"/>
</dbReference>
<dbReference type="SMR" id="Q1B647"/>
<dbReference type="KEGG" id="mmc:Mmcs_3530"/>
<dbReference type="HOGENOM" id="CLU_069765_1_1_11"/>
<dbReference type="UniPathway" id="UPA00253">
    <property type="reaction ID" value="UER00332"/>
</dbReference>
<dbReference type="GO" id="GO:0005524">
    <property type="term" value="F:ATP binding"/>
    <property type="evidence" value="ECO:0007669"/>
    <property type="project" value="UniProtKB-KW"/>
</dbReference>
<dbReference type="GO" id="GO:0004515">
    <property type="term" value="F:nicotinate-nucleotide adenylyltransferase activity"/>
    <property type="evidence" value="ECO:0007669"/>
    <property type="project" value="UniProtKB-UniRule"/>
</dbReference>
<dbReference type="GO" id="GO:0009435">
    <property type="term" value="P:NAD biosynthetic process"/>
    <property type="evidence" value="ECO:0007669"/>
    <property type="project" value="UniProtKB-UniRule"/>
</dbReference>
<dbReference type="CDD" id="cd02165">
    <property type="entry name" value="NMNAT"/>
    <property type="match status" value="1"/>
</dbReference>
<dbReference type="FunFam" id="3.40.50.620:FF:000039">
    <property type="entry name" value="Probable nicotinate-nucleotide adenylyltransferase"/>
    <property type="match status" value="1"/>
</dbReference>
<dbReference type="Gene3D" id="3.40.50.620">
    <property type="entry name" value="HUPs"/>
    <property type="match status" value="1"/>
</dbReference>
<dbReference type="HAMAP" id="MF_00244">
    <property type="entry name" value="NaMN_adenylyltr"/>
    <property type="match status" value="1"/>
</dbReference>
<dbReference type="InterPro" id="IPR004821">
    <property type="entry name" value="Cyt_trans-like"/>
</dbReference>
<dbReference type="InterPro" id="IPR005248">
    <property type="entry name" value="NadD/NMNAT"/>
</dbReference>
<dbReference type="InterPro" id="IPR014729">
    <property type="entry name" value="Rossmann-like_a/b/a_fold"/>
</dbReference>
<dbReference type="NCBIfam" id="TIGR00125">
    <property type="entry name" value="cyt_tran_rel"/>
    <property type="match status" value="1"/>
</dbReference>
<dbReference type="NCBIfam" id="TIGR00482">
    <property type="entry name" value="nicotinate (nicotinamide) nucleotide adenylyltransferase"/>
    <property type="match status" value="1"/>
</dbReference>
<dbReference type="NCBIfam" id="NF000840">
    <property type="entry name" value="PRK00071.1-3"/>
    <property type="match status" value="1"/>
</dbReference>
<dbReference type="PANTHER" id="PTHR39321">
    <property type="entry name" value="NICOTINATE-NUCLEOTIDE ADENYLYLTRANSFERASE-RELATED"/>
    <property type="match status" value="1"/>
</dbReference>
<dbReference type="PANTHER" id="PTHR39321:SF3">
    <property type="entry name" value="PHOSPHOPANTETHEINE ADENYLYLTRANSFERASE"/>
    <property type="match status" value="1"/>
</dbReference>
<dbReference type="Pfam" id="PF01467">
    <property type="entry name" value="CTP_transf_like"/>
    <property type="match status" value="1"/>
</dbReference>
<dbReference type="SUPFAM" id="SSF52374">
    <property type="entry name" value="Nucleotidylyl transferase"/>
    <property type="match status" value="1"/>
</dbReference>
<reference key="1">
    <citation type="submission" date="2006-06" db="EMBL/GenBank/DDBJ databases">
        <title>Complete sequence of chromosome of Mycobacterium sp. MCS.</title>
        <authorList>
            <consortium name="US DOE Joint Genome Institute"/>
            <person name="Copeland A."/>
            <person name="Lucas S."/>
            <person name="Lapidus A."/>
            <person name="Barry K."/>
            <person name="Detter J.C."/>
            <person name="Glavina del Rio T."/>
            <person name="Hammon N."/>
            <person name="Israni S."/>
            <person name="Dalin E."/>
            <person name="Tice H."/>
            <person name="Pitluck S."/>
            <person name="Martinez M."/>
            <person name="Schmutz J."/>
            <person name="Larimer F."/>
            <person name="Land M."/>
            <person name="Hauser L."/>
            <person name="Kyrpides N."/>
            <person name="Kim E."/>
            <person name="Miller C.D."/>
            <person name="Hughes J.E."/>
            <person name="Anderson A.J."/>
            <person name="Sims R.C."/>
            <person name="Richardson P."/>
        </authorList>
    </citation>
    <scope>NUCLEOTIDE SEQUENCE [LARGE SCALE GENOMIC DNA]</scope>
    <source>
        <strain>MCS</strain>
    </source>
</reference>
<evidence type="ECO:0000255" key="1">
    <source>
        <dbReference type="HAMAP-Rule" id="MF_00244"/>
    </source>
</evidence>
<evidence type="ECO:0000305" key="2"/>
<name>NADD_MYCSS</name>
<proteinExistence type="inferred from homology"/>